<reference key="1">
    <citation type="journal article" date="2000" name="Nucleic Acids Res.">
        <title>Genome sequences of Chlamydia trachomatis MoPn and Chlamydia pneumoniae AR39.</title>
        <authorList>
            <person name="Read T.D."/>
            <person name="Brunham R.C."/>
            <person name="Shen C."/>
            <person name="Gill S.R."/>
            <person name="Heidelberg J.F."/>
            <person name="White O."/>
            <person name="Hickey E.K."/>
            <person name="Peterson J.D."/>
            <person name="Utterback T.R."/>
            <person name="Berry K.J."/>
            <person name="Bass S."/>
            <person name="Linher K.D."/>
            <person name="Weidman J.F."/>
            <person name="Khouri H.M."/>
            <person name="Craven B."/>
            <person name="Bowman C."/>
            <person name="Dodson R.J."/>
            <person name="Gwinn M.L."/>
            <person name="Nelson W.C."/>
            <person name="DeBoy R.T."/>
            <person name="Kolonay J.F."/>
            <person name="McClarty G."/>
            <person name="Salzberg S.L."/>
            <person name="Eisen J.A."/>
            <person name="Fraser C.M."/>
        </authorList>
    </citation>
    <scope>NUCLEOTIDE SEQUENCE [LARGE SCALE GENOMIC DNA]</scope>
    <source>
        <strain>MoPn / Nigg</strain>
    </source>
</reference>
<feature type="chain" id="PRO_0000140109" description="GMP synthase [glutamine-hydrolyzing]">
    <location>
        <begin position="1"/>
        <end position="512"/>
    </location>
</feature>
<feature type="domain" description="Glutamine amidotransferase type-1">
    <location>
        <begin position="3"/>
        <end position="196"/>
    </location>
</feature>
<feature type="domain" description="GMPS ATP-PPase">
    <location>
        <begin position="197"/>
        <end position="387"/>
    </location>
</feature>
<feature type="active site" description="Nucleophile" evidence="1">
    <location>
        <position position="80"/>
    </location>
</feature>
<feature type="active site" evidence="1">
    <location>
        <position position="169"/>
    </location>
</feature>
<feature type="active site" evidence="1">
    <location>
        <position position="171"/>
    </location>
</feature>
<feature type="binding site" evidence="1">
    <location>
        <begin position="225"/>
        <end position="231"/>
    </location>
    <ligand>
        <name>ATP</name>
        <dbReference type="ChEBI" id="CHEBI:30616"/>
    </ligand>
</feature>
<gene>
    <name type="primary">guaA</name>
    <name type="ordered locus">TC_0442</name>
</gene>
<sequence>MSNILILDFGSQYTNVLAKKIRLLSVFCEVLPWNTPLEKILQKSPSGLIFSGGPHSVYQNNSPEVDKEIYNSNIPILGVCYGMQLIARDFGSEVQGGKSEFGYTPIVFYPSELFKGLADQDAFHTEIRMSHCDCVVVPPKDFFVIASSQHCPIAAIECPKKKLFGLQFHPEVSDSQDIGDKILSNFVKHICQTSETWKIETIEKQLIQGIREKVGETERVLLGLSGGVDSSVLAVLLHNALGDRLSCVFVDTGLLRKNEVEEVKQQFSSLGLEILVVDASEKFFHDLSGIEDPEQKRKVIGAAFIEVFDEASKNLDVQWLAQGTIYSDVIESAKSCDATQVIKSHHNVGGLPEKLNLKLLEPLRFLFKDEVRALGKVLGLPDVLISRHPFPGPGLGVRVLGEVRREYVEIVKNADSIFIEELKKANLYHKVSQAFAVFLPCKSVAVKGDCRHYGYTIALRAVESTDFMTACWPSLSREFLNRCSSRIINEIPEVCRVVYDISDKPPATIEWE</sequence>
<organism>
    <name type="scientific">Chlamydia muridarum (strain MoPn / Nigg)</name>
    <dbReference type="NCBI Taxonomy" id="243161"/>
    <lineage>
        <taxon>Bacteria</taxon>
        <taxon>Pseudomonadati</taxon>
        <taxon>Chlamydiota</taxon>
        <taxon>Chlamydiia</taxon>
        <taxon>Chlamydiales</taxon>
        <taxon>Chlamydiaceae</taxon>
        <taxon>Chlamydia/Chlamydophila group</taxon>
        <taxon>Chlamydia</taxon>
    </lineage>
</organism>
<comment type="function">
    <text evidence="1">Catalyzes the synthesis of GMP from XMP.</text>
</comment>
<comment type="catalytic activity">
    <reaction>
        <text>XMP + L-glutamine + ATP + H2O = GMP + L-glutamate + AMP + diphosphate + 2 H(+)</text>
        <dbReference type="Rhea" id="RHEA:11680"/>
        <dbReference type="ChEBI" id="CHEBI:15377"/>
        <dbReference type="ChEBI" id="CHEBI:15378"/>
        <dbReference type="ChEBI" id="CHEBI:29985"/>
        <dbReference type="ChEBI" id="CHEBI:30616"/>
        <dbReference type="ChEBI" id="CHEBI:33019"/>
        <dbReference type="ChEBI" id="CHEBI:57464"/>
        <dbReference type="ChEBI" id="CHEBI:58115"/>
        <dbReference type="ChEBI" id="CHEBI:58359"/>
        <dbReference type="ChEBI" id="CHEBI:456215"/>
        <dbReference type="EC" id="6.3.5.2"/>
    </reaction>
</comment>
<comment type="pathway">
    <text>Purine metabolism; GMP biosynthesis; GMP from XMP (L-Gln route): step 1/1.</text>
</comment>
<comment type="subunit">
    <text evidence="1">Homodimer.</text>
</comment>
<accession>Q9PKM3</accession>
<evidence type="ECO:0000250" key="1"/>
<proteinExistence type="inferred from homology"/>
<protein>
    <recommendedName>
        <fullName>GMP synthase [glutamine-hydrolyzing]</fullName>
        <ecNumber>6.3.5.2</ecNumber>
    </recommendedName>
    <alternativeName>
        <fullName>GMP synthetase</fullName>
    </alternativeName>
    <alternativeName>
        <fullName>Glutamine amidotransferase</fullName>
    </alternativeName>
</protein>
<keyword id="KW-0067">ATP-binding</keyword>
<keyword id="KW-0315">Glutamine amidotransferase</keyword>
<keyword id="KW-0332">GMP biosynthesis</keyword>
<keyword id="KW-0436">Ligase</keyword>
<keyword id="KW-0547">Nucleotide-binding</keyword>
<keyword id="KW-0658">Purine biosynthesis</keyword>
<name>GUAA_CHLMU</name>
<dbReference type="EC" id="6.3.5.2"/>
<dbReference type="EMBL" id="AE002160">
    <property type="protein sequence ID" value="AAF39296.1"/>
    <property type="molecule type" value="Genomic_DNA"/>
</dbReference>
<dbReference type="PIR" id="D81701">
    <property type="entry name" value="D81701"/>
</dbReference>
<dbReference type="RefSeq" id="WP_010230464.1">
    <property type="nucleotide sequence ID" value="NZ_CP063055.1"/>
</dbReference>
<dbReference type="SMR" id="Q9PKM3"/>
<dbReference type="GeneID" id="1245795"/>
<dbReference type="KEGG" id="cmu:TC_0442"/>
<dbReference type="eggNOG" id="COG0519">
    <property type="taxonomic scope" value="Bacteria"/>
</dbReference>
<dbReference type="HOGENOM" id="CLU_014340_0_5_0"/>
<dbReference type="OrthoDB" id="9802219at2"/>
<dbReference type="UniPathway" id="UPA00189">
    <property type="reaction ID" value="UER00296"/>
</dbReference>
<dbReference type="Proteomes" id="UP000000800">
    <property type="component" value="Chromosome"/>
</dbReference>
<dbReference type="GO" id="GO:0005829">
    <property type="term" value="C:cytosol"/>
    <property type="evidence" value="ECO:0007669"/>
    <property type="project" value="TreeGrafter"/>
</dbReference>
<dbReference type="GO" id="GO:0005524">
    <property type="term" value="F:ATP binding"/>
    <property type="evidence" value="ECO:0007669"/>
    <property type="project" value="UniProtKB-UniRule"/>
</dbReference>
<dbReference type="GO" id="GO:0003921">
    <property type="term" value="F:GMP synthase activity"/>
    <property type="evidence" value="ECO:0007669"/>
    <property type="project" value="InterPro"/>
</dbReference>
<dbReference type="CDD" id="cd01742">
    <property type="entry name" value="GATase1_GMP_Synthase"/>
    <property type="match status" value="1"/>
</dbReference>
<dbReference type="CDD" id="cd01997">
    <property type="entry name" value="GMP_synthase_C"/>
    <property type="match status" value="1"/>
</dbReference>
<dbReference type="FunFam" id="3.30.300.10:FF:000002">
    <property type="entry name" value="GMP synthase [glutamine-hydrolyzing]"/>
    <property type="match status" value="1"/>
</dbReference>
<dbReference type="FunFam" id="3.40.50.620:FF:000001">
    <property type="entry name" value="GMP synthase [glutamine-hydrolyzing]"/>
    <property type="match status" value="1"/>
</dbReference>
<dbReference type="Gene3D" id="3.30.300.10">
    <property type="match status" value="1"/>
</dbReference>
<dbReference type="Gene3D" id="3.40.50.880">
    <property type="match status" value="1"/>
</dbReference>
<dbReference type="Gene3D" id="3.40.50.620">
    <property type="entry name" value="HUPs"/>
    <property type="match status" value="1"/>
</dbReference>
<dbReference type="HAMAP" id="MF_00344">
    <property type="entry name" value="GMP_synthase"/>
    <property type="match status" value="1"/>
</dbReference>
<dbReference type="InterPro" id="IPR029062">
    <property type="entry name" value="Class_I_gatase-like"/>
</dbReference>
<dbReference type="InterPro" id="IPR017926">
    <property type="entry name" value="GATASE"/>
</dbReference>
<dbReference type="InterPro" id="IPR001674">
    <property type="entry name" value="GMP_synth_C"/>
</dbReference>
<dbReference type="InterPro" id="IPR004739">
    <property type="entry name" value="GMP_synth_GATase"/>
</dbReference>
<dbReference type="InterPro" id="IPR022955">
    <property type="entry name" value="GMP_synthase"/>
</dbReference>
<dbReference type="InterPro" id="IPR025777">
    <property type="entry name" value="GMPS_ATP_PPase_dom"/>
</dbReference>
<dbReference type="InterPro" id="IPR022310">
    <property type="entry name" value="NAD/GMP_synthase"/>
</dbReference>
<dbReference type="InterPro" id="IPR014729">
    <property type="entry name" value="Rossmann-like_a/b/a_fold"/>
</dbReference>
<dbReference type="NCBIfam" id="TIGR00884">
    <property type="entry name" value="guaA_Cterm"/>
    <property type="match status" value="1"/>
</dbReference>
<dbReference type="NCBIfam" id="TIGR00888">
    <property type="entry name" value="guaA_Nterm"/>
    <property type="match status" value="1"/>
</dbReference>
<dbReference type="NCBIfam" id="NF000848">
    <property type="entry name" value="PRK00074.1"/>
    <property type="match status" value="1"/>
</dbReference>
<dbReference type="PANTHER" id="PTHR11922:SF2">
    <property type="entry name" value="GMP SYNTHASE [GLUTAMINE-HYDROLYZING]"/>
    <property type="match status" value="1"/>
</dbReference>
<dbReference type="PANTHER" id="PTHR11922">
    <property type="entry name" value="GMP SYNTHASE-RELATED"/>
    <property type="match status" value="1"/>
</dbReference>
<dbReference type="Pfam" id="PF00117">
    <property type="entry name" value="GATase"/>
    <property type="match status" value="1"/>
</dbReference>
<dbReference type="Pfam" id="PF00958">
    <property type="entry name" value="GMP_synt_C"/>
    <property type="match status" value="1"/>
</dbReference>
<dbReference type="Pfam" id="PF02540">
    <property type="entry name" value="NAD_synthase"/>
    <property type="match status" value="1"/>
</dbReference>
<dbReference type="PRINTS" id="PR00096">
    <property type="entry name" value="GATASE"/>
</dbReference>
<dbReference type="SUPFAM" id="SSF52402">
    <property type="entry name" value="Adenine nucleotide alpha hydrolases-like"/>
    <property type="match status" value="1"/>
</dbReference>
<dbReference type="SUPFAM" id="SSF52317">
    <property type="entry name" value="Class I glutamine amidotransferase-like"/>
    <property type="match status" value="1"/>
</dbReference>
<dbReference type="SUPFAM" id="SSF54810">
    <property type="entry name" value="GMP synthetase C-terminal dimerisation domain"/>
    <property type="match status" value="1"/>
</dbReference>
<dbReference type="PROSITE" id="PS51273">
    <property type="entry name" value="GATASE_TYPE_1"/>
    <property type="match status" value="1"/>
</dbReference>
<dbReference type="PROSITE" id="PS51553">
    <property type="entry name" value="GMPS_ATP_PPASE"/>
    <property type="match status" value="1"/>
</dbReference>